<keyword id="KW-0131">Cell cycle</keyword>
<keyword id="KW-0132">Cell division</keyword>
<keyword id="KW-0195">Cyclin</keyword>
<keyword id="KW-1185">Reference proteome</keyword>
<sequence length="477" mass="52618">MAAKRPAAGEGGGKAAAGAAAAKKRVALVNITNVAAAANNAKFNSATWAAPVKKGSLASGRNVCTNRVSAVKSASAKPAPAISRHESAPQKESVIPPKVLSIVPTAAPAPVTVPCSSFVSPMHSGDSVSVDETMSMCDSMKSPDFEYIDNGDSSSVLGSLQRRANENLRISEDRDVEETKWNKDAPSPMEIDQICDVDNNYEDPQLCATLASDIYMHLREAETRKRPSTDFMETIQKDVNPSMRAILIDWLVEVAEEYRLVPDTLYLTVNYIDRYLSGNEINRQRLQLLGVACMLIAAKYEEICAPQVEEFCYITDNTYFRDEVLEMEASVLNYLKFEVTAPTAKCFLRRFVRVAQVSDEDPALHLEFLANYVAELSLLEYNLLSYPPSLVAASAIFLAKFILQPTKHPWNSTLAHYTQYKSSELSDCVKALHRLFSVGPGSNLPAIREKYTQHKKFVAKKHCPPSVPSEFFRDATC</sequence>
<reference key="1">
    <citation type="journal article" date="2002" name="Nature">
        <title>The genome sequence and structure of rice chromosome 1.</title>
        <authorList>
            <person name="Sasaki T."/>
            <person name="Matsumoto T."/>
            <person name="Yamamoto K."/>
            <person name="Sakata K."/>
            <person name="Baba T."/>
            <person name="Katayose Y."/>
            <person name="Wu J."/>
            <person name="Niimura Y."/>
            <person name="Cheng Z."/>
            <person name="Nagamura Y."/>
            <person name="Antonio B.A."/>
            <person name="Kanamori H."/>
            <person name="Hosokawa S."/>
            <person name="Masukawa M."/>
            <person name="Arikawa K."/>
            <person name="Chiden Y."/>
            <person name="Hayashi M."/>
            <person name="Okamoto M."/>
            <person name="Ando T."/>
            <person name="Aoki H."/>
            <person name="Arita K."/>
            <person name="Hamada M."/>
            <person name="Harada C."/>
            <person name="Hijishita S."/>
            <person name="Honda M."/>
            <person name="Ichikawa Y."/>
            <person name="Idonuma A."/>
            <person name="Iijima M."/>
            <person name="Ikeda M."/>
            <person name="Ikeno M."/>
            <person name="Ito S."/>
            <person name="Ito T."/>
            <person name="Ito Y."/>
            <person name="Ito Y."/>
            <person name="Iwabuchi A."/>
            <person name="Kamiya K."/>
            <person name="Karasawa W."/>
            <person name="Katagiri S."/>
            <person name="Kikuta A."/>
            <person name="Kobayashi N."/>
            <person name="Kono I."/>
            <person name="Machita K."/>
            <person name="Maehara T."/>
            <person name="Mizuno H."/>
            <person name="Mizubayashi T."/>
            <person name="Mukai Y."/>
            <person name="Nagasaki H."/>
            <person name="Nakashima M."/>
            <person name="Nakama Y."/>
            <person name="Nakamichi Y."/>
            <person name="Nakamura M."/>
            <person name="Namiki N."/>
            <person name="Negishi M."/>
            <person name="Ohta I."/>
            <person name="Ono N."/>
            <person name="Saji S."/>
            <person name="Sakai K."/>
            <person name="Shibata M."/>
            <person name="Shimokawa T."/>
            <person name="Shomura A."/>
            <person name="Song J."/>
            <person name="Takazaki Y."/>
            <person name="Terasawa K."/>
            <person name="Tsuji K."/>
            <person name="Waki K."/>
            <person name="Yamagata H."/>
            <person name="Yamane H."/>
            <person name="Yoshiki S."/>
            <person name="Yoshihara R."/>
            <person name="Yukawa K."/>
            <person name="Zhong H."/>
            <person name="Iwama H."/>
            <person name="Endo T."/>
            <person name="Ito H."/>
            <person name="Hahn J.H."/>
            <person name="Kim H.-I."/>
            <person name="Eun M.-Y."/>
            <person name="Yano M."/>
            <person name="Jiang J."/>
            <person name="Gojobori T."/>
        </authorList>
    </citation>
    <scope>NUCLEOTIDE SEQUENCE [LARGE SCALE GENOMIC DNA]</scope>
    <source>
        <strain>cv. Nipponbare</strain>
    </source>
</reference>
<reference key="2">
    <citation type="journal article" date="2005" name="Nature">
        <title>The map-based sequence of the rice genome.</title>
        <authorList>
            <consortium name="International rice genome sequencing project (IRGSP)"/>
        </authorList>
    </citation>
    <scope>NUCLEOTIDE SEQUENCE [LARGE SCALE GENOMIC DNA]</scope>
    <source>
        <strain>cv. Nipponbare</strain>
    </source>
</reference>
<reference key="3">
    <citation type="journal article" date="2008" name="Nucleic Acids Res.">
        <title>The rice annotation project database (RAP-DB): 2008 update.</title>
        <authorList>
            <consortium name="The rice annotation project (RAP)"/>
        </authorList>
    </citation>
    <scope>GENOME REANNOTATION</scope>
    <source>
        <strain>cv. Nipponbare</strain>
    </source>
</reference>
<reference key="4">
    <citation type="journal article" date="2013" name="Rice">
        <title>Improvement of the Oryza sativa Nipponbare reference genome using next generation sequence and optical map data.</title>
        <authorList>
            <person name="Kawahara Y."/>
            <person name="de la Bastide M."/>
            <person name="Hamilton J.P."/>
            <person name="Kanamori H."/>
            <person name="McCombie W.R."/>
            <person name="Ouyang S."/>
            <person name="Schwartz D.C."/>
            <person name="Tanaka T."/>
            <person name="Wu J."/>
            <person name="Zhou S."/>
            <person name="Childs K.L."/>
            <person name="Davidson R.M."/>
            <person name="Lin H."/>
            <person name="Quesada-Ocampo L."/>
            <person name="Vaillancourt B."/>
            <person name="Sakai H."/>
            <person name="Lee S.S."/>
            <person name="Kim J."/>
            <person name="Numa H."/>
            <person name="Itoh T."/>
            <person name="Buell C.R."/>
            <person name="Matsumoto T."/>
        </authorList>
    </citation>
    <scope>GENOME REANNOTATION</scope>
    <source>
        <strain>cv. Nipponbare</strain>
    </source>
</reference>
<reference key="5">
    <citation type="journal article" date="2006" name="Mol. Genet. Genomics">
        <title>Genome-wide analysis of cyclin family in rice (Oryza sativa L.).</title>
        <authorList>
            <person name="La H."/>
            <person name="Li J."/>
            <person name="Ji Z."/>
            <person name="Cheng Y."/>
            <person name="Li X."/>
            <person name="Jiang S."/>
            <person name="Venkatesh P.N."/>
            <person name="Ramachandran S."/>
        </authorList>
    </citation>
    <scope>GENE FAMILY</scope>
    <scope>NOMENCLATURE</scope>
</reference>
<comment type="similarity">
    <text evidence="1">Belongs to the cyclin family. Cyclin AB subfamily.</text>
</comment>
<comment type="sequence caution" evidence="1">
    <conflict type="erroneous gene model prediction">
        <sequence resource="EMBL-CDS" id="BAD81374"/>
    </conflict>
</comment>
<comment type="sequence caution" evidence="1">
    <conflict type="erroneous gene model prediction">
        <sequence resource="EMBL-CDS" id="BAF04423"/>
    </conflict>
</comment>
<name>CCA12_ORYSJ</name>
<organism>
    <name type="scientific">Oryza sativa subsp. japonica</name>
    <name type="common">Rice</name>
    <dbReference type="NCBI Taxonomy" id="39947"/>
    <lineage>
        <taxon>Eukaryota</taxon>
        <taxon>Viridiplantae</taxon>
        <taxon>Streptophyta</taxon>
        <taxon>Embryophyta</taxon>
        <taxon>Tracheophyta</taxon>
        <taxon>Spermatophyta</taxon>
        <taxon>Magnoliopsida</taxon>
        <taxon>Liliopsida</taxon>
        <taxon>Poales</taxon>
        <taxon>Poaceae</taxon>
        <taxon>BOP clade</taxon>
        <taxon>Oryzoideae</taxon>
        <taxon>Oryzeae</taxon>
        <taxon>Oryzinae</taxon>
        <taxon>Oryza</taxon>
        <taxon>Oryza sativa</taxon>
    </lineage>
</organism>
<gene>
    <name type="primary">CYCA1-2</name>
    <name type="ordered locus">Os01g0233100</name>
    <name type="ordered locus">Os01g0233300</name>
    <name type="ordered locus">LOC_Os01g13229</name>
    <name type="ORF">P0702F03.7</name>
</gene>
<evidence type="ECO:0000305" key="1"/>
<accession>Q0JPA4</accession>
<accession>Q0JPA5</accession>
<accession>Q5NAY2</accession>
<feature type="chain" id="PRO_0000286990" description="Cyclin-A1-2">
    <location>
        <begin position="1"/>
        <end position="477"/>
    </location>
</feature>
<proteinExistence type="inferred from homology"/>
<protein>
    <recommendedName>
        <fullName>Cyclin-A1-2</fullName>
    </recommendedName>
    <alternativeName>
        <fullName>G2/mitotic-specific cyclin-A1-2</fullName>
        <shortName>CycA1;2</shortName>
    </alternativeName>
</protein>
<dbReference type="EMBL" id="AP002481">
    <property type="protein sequence ID" value="BAD81374.1"/>
    <property type="status" value="ALT_SEQ"/>
    <property type="molecule type" value="Genomic_DNA"/>
</dbReference>
<dbReference type="EMBL" id="AP008207">
    <property type="protein sequence ID" value="BAF04423.2"/>
    <property type="status" value="ALT_SEQ"/>
    <property type="molecule type" value="Genomic_DNA"/>
</dbReference>
<dbReference type="EMBL" id="AP014957">
    <property type="status" value="NOT_ANNOTATED_CDS"/>
    <property type="molecule type" value="Genomic_DNA"/>
</dbReference>
<dbReference type="SMR" id="Q0JPA4"/>
<dbReference type="FunCoup" id="Q0JPA4">
    <property type="interactions" value="805"/>
</dbReference>
<dbReference type="STRING" id="39947.Q0JPA4"/>
<dbReference type="PaxDb" id="39947-Q0JPA4"/>
<dbReference type="KEGG" id="dosa:Os01g0233100"/>
<dbReference type="eggNOG" id="KOG0654">
    <property type="taxonomic scope" value="Eukaryota"/>
</dbReference>
<dbReference type="HOGENOM" id="CLU_020695_13_2_1"/>
<dbReference type="InParanoid" id="Q0JPA4"/>
<dbReference type="Proteomes" id="UP000000763">
    <property type="component" value="Chromosome 1"/>
</dbReference>
<dbReference type="Proteomes" id="UP000059680">
    <property type="component" value="Chromosome 1"/>
</dbReference>
<dbReference type="GO" id="GO:0000307">
    <property type="term" value="C:cyclin-dependent protein kinase holoenzyme complex"/>
    <property type="evidence" value="ECO:0000318"/>
    <property type="project" value="GO_Central"/>
</dbReference>
<dbReference type="GO" id="GO:0005737">
    <property type="term" value="C:cytoplasm"/>
    <property type="evidence" value="ECO:0000318"/>
    <property type="project" value="GO_Central"/>
</dbReference>
<dbReference type="GO" id="GO:0005634">
    <property type="term" value="C:nucleus"/>
    <property type="evidence" value="ECO:0000318"/>
    <property type="project" value="GO_Central"/>
</dbReference>
<dbReference type="GO" id="GO:0016538">
    <property type="term" value="F:cyclin-dependent protein serine/threonine kinase regulator activity"/>
    <property type="evidence" value="ECO:0000318"/>
    <property type="project" value="GO_Central"/>
</dbReference>
<dbReference type="GO" id="GO:0051301">
    <property type="term" value="P:cell division"/>
    <property type="evidence" value="ECO:0007669"/>
    <property type="project" value="UniProtKB-KW"/>
</dbReference>
<dbReference type="GO" id="GO:0000082">
    <property type="term" value="P:G1/S transition of mitotic cell cycle"/>
    <property type="evidence" value="ECO:0000318"/>
    <property type="project" value="GO_Central"/>
</dbReference>
<dbReference type="CDD" id="cd20506">
    <property type="entry name" value="CYCLIN_AtCycA-like_rpt2"/>
    <property type="match status" value="1"/>
</dbReference>
<dbReference type="CDD" id="cd20562">
    <property type="entry name" value="CYCLIN_AtCycA_like_rpt1"/>
    <property type="match status" value="1"/>
</dbReference>
<dbReference type="FunFam" id="1.10.472.10:FF:000013">
    <property type="entry name" value="Cyclin A1"/>
    <property type="match status" value="1"/>
</dbReference>
<dbReference type="FunFam" id="1.10.472.10:FF:000103">
    <property type="entry name" value="Cyclin B1"/>
    <property type="match status" value="1"/>
</dbReference>
<dbReference type="FunFam" id="1.10.472.10:FF:000167">
    <property type="entry name" value="Mitotic cyclin 6"/>
    <property type="match status" value="1"/>
</dbReference>
<dbReference type="Gene3D" id="1.10.472.10">
    <property type="entry name" value="Cyclin-like"/>
    <property type="match status" value="2"/>
</dbReference>
<dbReference type="InterPro" id="IPR039361">
    <property type="entry name" value="Cyclin"/>
</dbReference>
<dbReference type="InterPro" id="IPR013763">
    <property type="entry name" value="Cyclin-like_dom"/>
</dbReference>
<dbReference type="InterPro" id="IPR036915">
    <property type="entry name" value="Cyclin-like_sf"/>
</dbReference>
<dbReference type="InterPro" id="IPR046965">
    <property type="entry name" value="Cyclin_A/B-like"/>
</dbReference>
<dbReference type="InterPro" id="IPR004367">
    <property type="entry name" value="Cyclin_C-dom"/>
</dbReference>
<dbReference type="InterPro" id="IPR006671">
    <property type="entry name" value="Cyclin_N"/>
</dbReference>
<dbReference type="InterPro" id="IPR048258">
    <property type="entry name" value="Cyclins_cyclin-box"/>
</dbReference>
<dbReference type="PANTHER" id="PTHR10177">
    <property type="entry name" value="CYCLINS"/>
    <property type="match status" value="1"/>
</dbReference>
<dbReference type="Pfam" id="PF02984">
    <property type="entry name" value="Cyclin_C"/>
    <property type="match status" value="1"/>
</dbReference>
<dbReference type="Pfam" id="PF00134">
    <property type="entry name" value="Cyclin_N"/>
    <property type="match status" value="1"/>
</dbReference>
<dbReference type="PIRSF" id="PIRSF001771">
    <property type="entry name" value="Cyclin_A_B_D_E"/>
    <property type="match status" value="1"/>
</dbReference>
<dbReference type="SMART" id="SM00385">
    <property type="entry name" value="CYCLIN"/>
    <property type="match status" value="2"/>
</dbReference>
<dbReference type="SMART" id="SM01332">
    <property type="entry name" value="Cyclin_C"/>
    <property type="match status" value="1"/>
</dbReference>
<dbReference type="SUPFAM" id="SSF47954">
    <property type="entry name" value="Cyclin-like"/>
    <property type="match status" value="2"/>
</dbReference>
<dbReference type="PROSITE" id="PS00292">
    <property type="entry name" value="CYCLINS"/>
    <property type="match status" value="1"/>
</dbReference>